<accession>Q73P70</accession>
<protein>
    <recommendedName>
        <fullName evidence="2">Ornithine carbamoyltransferase, catabolic</fullName>
        <shortName evidence="2">OTCase</shortName>
        <ecNumber evidence="2">2.1.3.3</ecNumber>
    </recommendedName>
</protein>
<feature type="chain" id="PRO_0000113052" description="Ornithine carbamoyltransferase, catabolic">
    <location>
        <begin position="1"/>
        <end position="338"/>
    </location>
</feature>
<feature type="binding site" evidence="2">
    <location>
        <begin position="65"/>
        <end position="68"/>
    </location>
    <ligand>
        <name>carbamoyl phosphate</name>
        <dbReference type="ChEBI" id="CHEBI:58228"/>
    </ligand>
</feature>
<feature type="binding site" evidence="2">
    <location>
        <position position="92"/>
    </location>
    <ligand>
        <name>carbamoyl phosphate</name>
        <dbReference type="ChEBI" id="CHEBI:58228"/>
    </ligand>
</feature>
<feature type="binding site" evidence="2">
    <location>
        <position position="116"/>
    </location>
    <ligand>
        <name>carbamoyl phosphate</name>
        <dbReference type="ChEBI" id="CHEBI:58228"/>
    </ligand>
</feature>
<feature type="binding site" evidence="2">
    <location>
        <begin position="143"/>
        <end position="146"/>
    </location>
    <ligand>
        <name>carbamoyl phosphate</name>
        <dbReference type="ChEBI" id="CHEBI:58228"/>
    </ligand>
</feature>
<feature type="binding site" evidence="2">
    <location>
        <position position="175"/>
    </location>
    <ligand>
        <name>L-ornithine</name>
        <dbReference type="ChEBI" id="CHEBI:46911"/>
    </ligand>
</feature>
<feature type="binding site" evidence="2">
    <location>
        <position position="239"/>
    </location>
    <ligand>
        <name>L-ornithine</name>
        <dbReference type="ChEBI" id="CHEBI:46911"/>
    </ligand>
</feature>
<feature type="binding site" evidence="2">
    <location>
        <begin position="243"/>
        <end position="244"/>
    </location>
    <ligand>
        <name>L-ornithine</name>
        <dbReference type="ChEBI" id="CHEBI:46911"/>
    </ligand>
</feature>
<feature type="binding site" evidence="2">
    <location>
        <begin position="280"/>
        <end position="281"/>
    </location>
    <ligand>
        <name>carbamoyl phosphate</name>
        <dbReference type="ChEBI" id="CHEBI:58228"/>
    </ligand>
</feature>
<feature type="binding site" evidence="2">
    <location>
        <position position="325"/>
    </location>
    <ligand>
        <name>carbamoyl phosphate</name>
        <dbReference type="ChEBI" id="CHEBI:58228"/>
    </ligand>
</feature>
<sequence>MLKEIRGKSAKNLRGRSFLKLLDFTTDEIRYLLDLSKNFKDMKRAGIPHRYLEGKNIVLLFEKTSTRTRCSFEVAGYDLGMGVTYLDPNSSQMGHKESIEDTARVLGRMYDGIEYRGFSQELVETLAEYSGVPVWNGLTDLFHPTQMLADLLTIEEKFGYLKGLKFTYMGDARNNVANSLMIACVKMGMHFTACSPKHLFPTEDLVAEAKKIAAQTGGSVTLTENVSEGTKGAHVLYTDIWVSMGEPDSVWEERIKLLKPYQVNKAAMDNADKDAIFLHCLPSFHDLKTTKGQEINKKFGLPEMEVTNEVFESHKSVVFDEAENRMHTIKAVMYATMC</sequence>
<reference key="1">
    <citation type="journal article" date="2004" name="Proc. Natl. Acad. Sci. U.S.A.">
        <title>Comparison of the genome of the oral pathogen Treponema denticola with other spirochete genomes.</title>
        <authorList>
            <person name="Seshadri R."/>
            <person name="Myers G.S.A."/>
            <person name="Tettelin H."/>
            <person name="Eisen J.A."/>
            <person name="Heidelberg J.F."/>
            <person name="Dodson R.J."/>
            <person name="Davidsen T.M."/>
            <person name="DeBoy R.T."/>
            <person name="Fouts D.E."/>
            <person name="Haft D.H."/>
            <person name="Selengut J."/>
            <person name="Ren Q."/>
            <person name="Brinkac L.M."/>
            <person name="Madupu R."/>
            <person name="Kolonay J.F."/>
            <person name="Durkin S.A."/>
            <person name="Daugherty S.C."/>
            <person name="Shetty J."/>
            <person name="Shvartsbeyn A."/>
            <person name="Gebregeorgis E."/>
            <person name="Geer K."/>
            <person name="Tsegaye G."/>
            <person name="Malek J.A."/>
            <person name="Ayodeji B."/>
            <person name="Shatsman S."/>
            <person name="McLeod M.P."/>
            <person name="Smajs D."/>
            <person name="Howell J.K."/>
            <person name="Pal S."/>
            <person name="Amin A."/>
            <person name="Vashisth P."/>
            <person name="McNeill T.Z."/>
            <person name="Xiang Q."/>
            <person name="Sodergren E."/>
            <person name="Baca E."/>
            <person name="Weinstock G.M."/>
            <person name="Norris S.J."/>
            <person name="Fraser C.M."/>
            <person name="Paulsen I.T."/>
        </authorList>
    </citation>
    <scope>NUCLEOTIDE SEQUENCE [LARGE SCALE GENOMIC DNA]</scope>
    <source>
        <strain>ATCC 35405 / DSM 14222 / CIP 103919 / JCM 8153 / KCTC 15104</strain>
    </source>
</reference>
<organism>
    <name type="scientific">Treponema denticola (strain ATCC 35405 / DSM 14222 / CIP 103919 / JCM 8153 / KCTC 15104)</name>
    <dbReference type="NCBI Taxonomy" id="243275"/>
    <lineage>
        <taxon>Bacteria</taxon>
        <taxon>Pseudomonadati</taxon>
        <taxon>Spirochaetota</taxon>
        <taxon>Spirochaetia</taxon>
        <taxon>Spirochaetales</taxon>
        <taxon>Treponemataceae</taxon>
        <taxon>Treponema</taxon>
    </lineage>
</organism>
<comment type="function">
    <text evidence="1">Reversibly catalyzes the transfer of the carbamoyl group from carbamoyl phosphate (CP) to the N(epsilon) atom of ornithine (ORN) to produce L-citrulline.</text>
</comment>
<comment type="catalytic activity">
    <reaction evidence="2">
        <text>carbamoyl phosphate + L-ornithine = L-citrulline + phosphate + H(+)</text>
        <dbReference type="Rhea" id="RHEA:19513"/>
        <dbReference type="ChEBI" id="CHEBI:15378"/>
        <dbReference type="ChEBI" id="CHEBI:43474"/>
        <dbReference type="ChEBI" id="CHEBI:46911"/>
        <dbReference type="ChEBI" id="CHEBI:57743"/>
        <dbReference type="ChEBI" id="CHEBI:58228"/>
        <dbReference type="EC" id="2.1.3.3"/>
    </reaction>
</comment>
<comment type="pathway">
    <text evidence="2">Amino-acid degradation; L-arginine degradation via ADI pathway; carbamoyl phosphate from L-arginine: step 2/2.</text>
</comment>
<comment type="subcellular location">
    <subcellularLocation>
        <location evidence="2">Cytoplasm</location>
    </subcellularLocation>
</comment>
<comment type="similarity">
    <text evidence="2">Belongs to the aspartate/ornithine carbamoyltransferase superfamily. OTCase family.</text>
</comment>
<proteinExistence type="inferred from homology"/>
<evidence type="ECO:0000250" key="1"/>
<evidence type="ECO:0000255" key="2">
    <source>
        <dbReference type="HAMAP-Rule" id="MF_01109"/>
    </source>
</evidence>
<name>OTCC_TREDE</name>
<dbReference type="EC" id="2.1.3.3" evidence="2"/>
<dbReference type="EMBL" id="AE017226">
    <property type="protein sequence ID" value="AAS11420.1"/>
    <property type="molecule type" value="Genomic_DNA"/>
</dbReference>
<dbReference type="RefSeq" id="NP_971539.1">
    <property type="nucleotide sequence ID" value="NC_002967.9"/>
</dbReference>
<dbReference type="SMR" id="Q73P70"/>
<dbReference type="STRING" id="243275.TDE_0929"/>
<dbReference type="PaxDb" id="243275-TDE_0929"/>
<dbReference type="GeneID" id="2740394"/>
<dbReference type="KEGG" id="tde:TDE_0929"/>
<dbReference type="PATRIC" id="fig|243275.7.peg.897"/>
<dbReference type="eggNOG" id="COG0078">
    <property type="taxonomic scope" value="Bacteria"/>
</dbReference>
<dbReference type="HOGENOM" id="CLU_043846_3_1_12"/>
<dbReference type="OrthoDB" id="9802587at2"/>
<dbReference type="UniPathway" id="UPA00254">
    <property type="reaction ID" value="UER00365"/>
</dbReference>
<dbReference type="Proteomes" id="UP000008212">
    <property type="component" value="Chromosome"/>
</dbReference>
<dbReference type="GO" id="GO:0005737">
    <property type="term" value="C:cytoplasm"/>
    <property type="evidence" value="ECO:0007669"/>
    <property type="project" value="UniProtKB-SubCell"/>
</dbReference>
<dbReference type="GO" id="GO:0016597">
    <property type="term" value="F:amino acid binding"/>
    <property type="evidence" value="ECO:0007669"/>
    <property type="project" value="InterPro"/>
</dbReference>
<dbReference type="GO" id="GO:0004585">
    <property type="term" value="F:ornithine carbamoyltransferase activity"/>
    <property type="evidence" value="ECO:0007669"/>
    <property type="project" value="UniProtKB-UniRule"/>
</dbReference>
<dbReference type="GO" id="GO:0042450">
    <property type="term" value="P:arginine biosynthetic process via ornithine"/>
    <property type="evidence" value="ECO:0007669"/>
    <property type="project" value="TreeGrafter"/>
</dbReference>
<dbReference type="GO" id="GO:0019547">
    <property type="term" value="P:arginine catabolic process to ornithine"/>
    <property type="evidence" value="ECO:0007669"/>
    <property type="project" value="UniProtKB-UniRule"/>
</dbReference>
<dbReference type="GO" id="GO:0019240">
    <property type="term" value="P:citrulline biosynthetic process"/>
    <property type="evidence" value="ECO:0007669"/>
    <property type="project" value="TreeGrafter"/>
</dbReference>
<dbReference type="FunFam" id="3.40.50.1370:FF:000008">
    <property type="entry name" value="Ornithine carbamoyltransferase"/>
    <property type="match status" value="1"/>
</dbReference>
<dbReference type="Gene3D" id="3.40.50.1370">
    <property type="entry name" value="Aspartate/ornithine carbamoyltransferase"/>
    <property type="match status" value="2"/>
</dbReference>
<dbReference type="HAMAP" id="MF_01109">
    <property type="entry name" value="OTCase"/>
    <property type="match status" value="1"/>
</dbReference>
<dbReference type="InterPro" id="IPR006132">
    <property type="entry name" value="Asp/Orn_carbamoyltranf_P-bd"/>
</dbReference>
<dbReference type="InterPro" id="IPR006130">
    <property type="entry name" value="Asp/Orn_carbamoylTrfase"/>
</dbReference>
<dbReference type="InterPro" id="IPR036901">
    <property type="entry name" value="Asp/Orn_carbamoylTrfase_sf"/>
</dbReference>
<dbReference type="InterPro" id="IPR006131">
    <property type="entry name" value="Asp_carbamoyltransf_Asp/Orn-bd"/>
</dbReference>
<dbReference type="InterPro" id="IPR002292">
    <property type="entry name" value="Orn/put_carbamltrans"/>
</dbReference>
<dbReference type="InterPro" id="IPR024904">
    <property type="entry name" value="OTCase_ArgI"/>
</dbReference>
<dbReference type="NCBIfam" id="TIGR00658">
    <property type="entry name" value="orni_carb_tr"/>
    <property type="match status" value="1"/>
</dbReference>
<dbReference type="NCBIfam" id="NF001986">
    <property type="entry name" value="PRK00779.1"/>
    <property type="match status" value="1"/>
</dbReference>
<dbReference type="NCBIfam" id="NF003286">
    <property type="entry name" value="PRK04284.1"/>
    <property type="match status" value="1"/>
</dbReference>
<dbReference type="PANTHER" id="PTHR45753:SF2">
    <property type="entry name" value="ORNITHINE CARBAMOYLTRANSFERASE"/>
    <property type="match status" value="1"/>
</dbReference>
<dbReference type="PANTHER" id="PTHR45753">
    <property type="entry name" value="ORNITHINE CARBAMOYLTRANSFERASE, MITOCHONDRIAL"/>
    <property type="match status" value="1"/>
</dbReference>
<dbReference type="Pfam" id="PF00185">
    <property type="entry name" value="OTCace"/>
    <property type="match status" value="1"/>
</dbReference>
<dbReference type="Pfam" id="PF02729">
    <property type="entry name" value="OTCace_N"/>
    <property type="match status" value="1"/>
</dbReference>
<dbReference type="PRINTS" id="PR00100">
    <property type="entry name" value="AOTCASE"/>
</dbReference>
<dbReference type="PRINTS" id="PR00102">
    <property type="entry name" value="OTCASE"/>
</dbReference>
<dbReference type="SUPFAM" id="SSF53671">
    <property type="entry name" value="Aspartate/ornithine carbamoyltransferase"/>
    <property type="match status" value="1"/>
</dbReference>
<dbReference type="PROSITE" id="PS00097">
    <property type="entry name" value="CARBAMOYLTRANSFERASE"/>
    <property type="match status" value="1"/>
</dbReference>
<keyword id="KW-0056">Arginine metabolism</keyword>
<keyword id="KW-0963">Cytoplasm</keyword>
<keyword id="KW-1185">Reference proteome</keyword>
<keyword id="KW-0808">Transferase</keyword>
<gene>
    <name evidence="2" type="primary">arcB</name>
    <name type="ordered locus">TDE_0929</name>
</gene>